<name>RLMN_STRR6</name>
<keyword id="KW-0004">4Fe-4S</keyword>
<keyword id="KW-0963">Cytoplasm</keyword>
<keyword id="KW-1015">Disulfide bond</keyword>
<keyword id="KW-0408">Iron</keyword>
<keyword id="KW-0411">Iron-sulfur</keyword>
<keyword id="KW-0479">Metal-binding</keyword>
<keyword id="KW-0489">Methyltransferase</keyword>
<keyword id="KW-1185">Reference proteome</keyword>
<keyword id="KW-0698">rRNA processing</keyword>
<keyword id="KW-0949">S-adenosyl-L-methionine</keyword>
<keyword id="KW-0808">Transferase</keyword>
<keyword id="KW-0819">tRNA processing</keyword>
<proteinExistence type="inferred from homology"/>
<gene>
    <name evidence="1" type="primary">rlmN</name>
    <name type="ordered locus">spr0676</name>
</gene>
<protein>
    <recommendedName>
        <fullName evidence="1">Probable dual-specificity RNA methyltransferase RlmN</fullName>
        <ecNumber evidence="1">2.1.1.192</ecNumber>
    </recommendedName>
    <alternativeName>
        <fullName evidence="1">23S rRNA (adenine(2503)-C(2))-methyltransferase</fullName>
    </alternativeName>
    <alternativeName>
        <fullName evidence="1">23S rRNA m2A2503 methyltransferase</fullName>
    </alternativeName>
    <alternativeName>
        <fullName evidence="1">Ribosomal RNA large subunit methyltransferase N</fullName>
    </alternativeName>
    <alternativeName>
        <fullName evidence="1">tRNA (adenine(37)-C(2))-methyltransferase</fullName>
    </alternativeName>
    <alternativeName>
        <fullName evidence="1">tRNA m2A37 methyltransferase</fullName>
    </alternativeName>
</protein>
<sequence length="361" mass="41306">MKPSIHSLAHQTMQEWVLEQGEKKFRADQIWEWLYRKRVQSFEEMTNLSKDLIAKLNDQFVVNPLKQRIVQESADGTVKYLFELPDGMLIETVLMRQHYGLSVCVTTQVDCNIGCTFCASDLIKKQRDLNNGEIVAQIMLVQKYFAERGQDERVSHIVVMGIGEPFDNYNNVLNFVCTINDDKGMAIGARHITVSTSGLAHKIRNFADEGVQVNLAVSLHAPNNELRSSIMKINRAFPIEKLFAAIEYYIETTNRRVTFEYIMLNEVNDSVEQALELAELLKNIKKLSYVNLIPYNPVSEHDQYSRSPKERVLAFYDTLKKKGGNCVVRQEYGTDIDAACGQLRSNTMKRDRQKAVAEVNP</sequence>
<feature type="chain" id="PRO_0000350454" description="Probable dual-specificity RNA methyltransferase RlmN">
    <location>
        <begin position="1"/>
        <end position="361"/>
    </location>
</feature>
<feature type="domain" description="Radical SAM core" evidence="2">
    <location>
        <begin position="97"/>
        <end position="329"/>
    </location>
</feature>
<feature type="active site" description="Proton acceptor" evidence="1">
    <location>
        <position position="91"/>
    </location>
</feature>
<feature type="active site" description="S-methylcysteine intermediate" evidence="1">
    <location>
        <position position="340"/>
    </location>
</feature>
<feature type="binding site" evidence="1">
    <location>
        <position position="111"/>
    </location>
    <ligand>
        <name>[4Fe-4S] cluster</name>
        <dbReference type="ChEBI" id="CHEBI:49883"/>
        <note>4Fe-4S-S-AdoMet</note>
    </ligand>
</feature>
<feature type="binding site" evidence="1">
    <location>
        <position position="115"/>
    </location>
    <ligand>
        <name>[4Fe-4S] cluster</name>
        <dbReference type="ChEBI" id="CHEBI:49883"/>
        <note>4Fe-4S-S-AdoMet</note>
    </ligand>
</feature>
<feature type="binding site" evidence="1">
    <location>
        <position position="118"/>
    </location>
    <ligand>
        <name>[4Fe-4S] cluster</name>
        <dbReference type="ChEBI" id="CHEBI:49883"/>
        <note>4Fe-4S-S-AdoMet</note>
    </ligand>
</feature>
<feature type="binding site" evidence="1">
    <location>
        <begin position="163"/>
        <end position="164"/>
    </location>
    <ligand>
        <name>S-adenosyl-L-methionine</name>
        <dbReference type="ChEBI" id="CHEBI:59789"/>
    </ligand>
</feature>
<feature type="binding site" evidence="1">
    <location>
        <position position="195"/>
    </location>
    <ligand>
        <name>S-adenosyl-L-methionine</name>
        <dbReference type="ChEBI" id="CHEBI:59789"/>
    </ligand>
</feature>
<feature type="binding site" evidence="1">
    <location>
        <begin position="218"/>
        <end position="220"/>
    </location>
    <ligand>
        <name>S-adenosyl-L-methionine</name>
        <dbReference type="ChEBI" id="CHEBI:59789"/>
    </ligand>
</feature>
<feature type="binding site" evidence="1">
    <location>
        <position position="296"/>
    </location>
    <ligand>
        <name>S-adenosyl-L-methionine</name>
        <dbReference type="ChEBI" id="CHEBI:59789"/>
    </ligand>
</feature>
<feature type="disulfide bond" description="(transient)" evidence="1">
    <location>
        <begin position="104"/>
        <end position="340"/>
    </location>
</feature>
<comment type="function">
    <text evidence="1">Specifically methylates position 2 of adenine 2503 in 23S rRNA and position 2 of adenine 37 in tRNAs.</text>
</comment>
<comment type="catalytic activity">
    <reaction evidence="1">
        <text>adenosine(2503) in 23S rRNA + 2 reduced [2Fe-2S]-[ferredoxin] + 2 S-adenosyl-L-methionine = 2-methyladenosine(2503) in 23S rRNA + 5'-deoxyadenosine + L-methionine + 2 oxidized [2Fe-2S]-[ferredoxin] + S-adenosyl-L-homocysteine</text>
        <dbReference type="Rhea" id="RHEA:42916"/>
        <dbReference type="Rhea" id="RHEA-COMP:10000"/>
        <dbReference type="Rhea" id="RHEA-COMP:10001"/>
        <dbReference type="Rhea" id="RHEA-COMP:10152"/>
        <dbReference type="Rhea" id="RHEA-COMP:10282"/>
        <dbReference type="ChEBI" id="CHEBI:17319"/>
        <dbReference type="ChEBI" id="CHEBI:33737"/>
        <dbReference type="ChEBI" id="CHEBI:33738"/>
        <dbReference type="ChEBI" id="CHEBI:57844"/>
        <dbReference type="ChEBI" id="CHEBI:57856"/>
        <dbReference type="ChEBI" id="CHEBI:59789"/>
        <dbReference type="ChEBI" id="CHEBI:74411"/>
        <dbReference type="ChEBI" id="CHEBI:74497"/>
        <dbReference type="EC" id="2.1.1.192"/>
    </reaction>
</comment>
<comment type="catalytic activity">
    <reaction evidence="1">
        <text>adenosine(37) in tRNA + 2 reduced [2Fe-2S]-[ferredoxin] + 2 S-adenosyl-L-methionine = 2-methyladenosine(37) in tRNA + 5'-deoxyadenosine + L-methionine + 2 oxidized [2Fe-2S]-[ferredoxin] + S-adenosyl-L-homocysteine</text>
        <dbReference type="Rhea" id="RHEA:43332"/>
        <dbReference type="Rhea" id="RHEA-COMP:10000"/>
        <dbReference type="Rhea" id="RHEA-COMP:10001"/>
        <dbReference type="Rhea" id="RHEA-COMP:10162"/>
        <dbReference type="Rhea" id="RHEA-COMP:10485"/>
        <dbReference type="ChEBI" id="CHEBI:17319"/>
        <dbReference type="ChEBI" id="CHEBI:33737"/>
        <dbReference type="ChEBI" id="CHEBI:33738"/>
        <dbReference type="ChEBI" id="CHEBI:57844"/>
        <dbReference type="ChEBI" id="CHEBI:57856"/>
        <dbReference type="ChEBI" id="CHEBI:59789"/>
        <dbReference type="ChEBI" id="CHEBI:74411"/>
        <dbReference type="ChEBI" id="CHEBI:74497"/>
        <dbReference type="EC" id="2.1.1.192"/>
    </reaction>
</comment>
<comment type="cofactor">
    <cofactor evidence="1">
        <name>[4Fe-4S] cluster</name>
        <dbReference type="ChEBI" id="CHEBI:49883"/>
    </cofactor>
    <text evidence="1">Binds 1 [4Fe-4S] cluster. The cluster is coordinated with 3 cysteines and an exchangeable S-adenosyl-L-methionine.</text>
</comment>
<comment type="subcellular location">
    <subcellularLocation>
        <location evidence="1">Cytoplasm</location>
    </subcellularLocation>
</comment>
<comment type="miscellaneous">
    <text evidence="1">Reaction proceeds by a ping-pong mechanism involving intermediate methylation of a conserved cysteine residue.</text>
</comment>
<comment type="similarity">
    <text evidence="1">Belongs to the radical SAM superfamily. RlmN family.</text>
</comment>
<dbReference type="EC" id="2.1.1.192" evidence="1"/>
<dbReference type="EMBL" id="AE007317">
    <property type="protein sequence ID" value="AAK99480.1"/>
    <property type="molecule type" value="Genomic_DNA"/>
</dbReference>
<dbReference type="PIR" id="D97956">
    <property type="entry name" value="D97956"/>
</dbReference>
<dbReference type="RefSeq" id="NP_358270.1">
    <property type="nucleotide sequence ID" value="NC_003098.1"/>
</dbReference>
<dbReference type="RefSeq" id="WP_000804635.1">
    <property type="nucleotide sequence ID" value="NC_003098.1"/>
</dbReference>
<dbReference type="SMR" id="Q8DQG7"/>
<dbReference type="STRING" id="171101.spr0676"/>
<dbReference type="KEGG" id="spr:spr0676"/>
<dbReference type="PATRIC" id="fig|171101.6.peg.748"/>
<dbReference type="eggNOG" id="COG0820">
    <property type="taxonomic scope" value="Bacteria"/>
</dbReference>
<dbReference type="HOGENOM" id="CLU_029101_0_1_9"/>
<dbReference type="Proteomes" id="UP000000586">
    <property type="component" value="Chromosome"/>
</dbReference>
<dbReference type="GO" id="GO:0005737">
    <property type="term" value="C:cytoplasm"/>
    <property type="evidence" value="ECO:0007669"/>
    <property type="project" value="UniProtKB-SubCell"/>
</dbReference>
<dbReference type="GO" id="GO:0051539">
    <property type="term" value="F:4 iron, 4 sulfur cluster binding"/>
    <property type="evidence" value="ECO:0007669"/>
    <property type="project" value="UniProtKB-UniRule"/>
</dbReference>
<dbReference type="GO" id="GO:0046872">
    <property type="term" value="F:metal ion binding"/>
    <property type="evidence" value="ECO:0007669"/>
    <property type="project" value="UniProtKB-KW"/>
</dbReference>
<dbReference type="GO" id="GO:0070040">
    <property type="term" value="F:rRNA (adenine(2503)-C2-)-methyltransferase activity"/>
    <property type="evidence" value="ECO:0007669"/>
    <property type="project" value="UniProtKB-UniRule"/>
</dbReference>
<dbReference type="GO" id="GO:0019843">
    <property type="term" value="F:rRNA binding"/>
    <property type="evidence" value="ECO:0007669"/>
    <property type="project" value="UniProtKB-UniRule"/>
</dbReference>
<dbReference type="GO" id="GO:0002935">
    <property type="term" value="F:tRNA (adenine(37)-C2)-methyltransferase activity"/>
    <property type="evidence" value="ECO:0007669"/>
    <property type="project" value="UniProtKB-UniRule"/>
</dbReference>
<dbReference type="GO" id="GO:0000049">
    <property type="term" value="F:tRNA binding"/>
    <property type="evidence" value="ECO:0007669"/>
    <property type="project" value="UniProtKB-UniRule"/>
</dbReference>
<dbReference type="GO" id="GO:0070475">
    <property type="term" value="P:rRNA base methylation"/>
    <property type="evidence" value="ECO:0000318"/>
    <property type="project" value="GO_Central"/>
</dbReference>
<dbReference type="GO" id="GO:0030488">
    <property type="term" value="P:tRNA methylation"/>
    <property type="evidence" value="ECO:0000318"/>
    <property type="project" value="GO_Central"/>
</dbReference>
<dbReference type="CDD" id="cd01335">
    <property type="entry name" value="Radical_SAM"/>
    <property type="match status" value="1"/>
</dbReference>
<dbReference type="FunFam" id="1.10.150.530:FF:000002">
    <property type="entry name" value="Probable dual-specificity RNA methyltransferase RlmN"/>
    <property type="match status" value="1"/>
</dbReference>
<dbReference type="FunFam" id="3.20.20.70:FF:000014">
    <property type="entry name" value="Probable dual-specificity RNA methyltransferase RlmN"/>
    <property type="match status" value="1"/>
</dbReference>
<dbReference type="Gene3D" id="1.10.150.530">
    <property type="match status" value="1"/>
</dbReference>
<dbReference type="Gene3D" id="3.20.20.70">
    <property type="entry name" value="Aldolase class I"/>
    <property type="match status" value="1"/>
</dbReference>
<dbReference type="HAMAP" id="MF_01849">
    <property type="entry name" value="RNA_methyltr_RlmN"/>
    <property type="match status" value="1"/>
</dbReference>
<dbReference type="InterPro" id="IPR013785">
    <property type="entry name" value="Aldolase_TIM"/>
</dbReference>
<dbReference type="InterPro" id="IPR040072">
    <property type="entry name" value="Methyltransferase_A"/>
</dbReference>
<dbReference type="InterPro" id="IPR048641">
    <property type="entry name" value="RlmN_N"/>
</dbReference>
<dbReference type="InterPro" id="IPR027492">
    <property type="entry name" value="RNA_MTrfase_RlmN"/>
</dbReference>
<dbReference type="InterPro" id="IPR004383">
    <property type="entry name" value="rRNA_lsu_MTrfase_RlmN/Cfr"/>
</dbReference>
<dbReference type="InterPro" id="IPR007197">
    <property type="entry name" value="rSAM"/>
</dbReference>
<dbReference type="NCBIfam" id="TIGR00048">
    <property type="entry name" value="rRNA_mod_RlmN"/>
    <property type="match status" value="1"/>
</dbReference>
<dbReference type="PANTHER" id="PTHR30544">
    <property type="entry name" value="23S RRNA METHYLTRANSFERASE"/>
    <property type="match status" value="1"/>
</dbReference>
<dbReference type="PANTHER" id="PTHR30544:SF5">
    <property type="entry name" value="RADICAL SAM CORE DOMAIN-CONTAINING PROTEIN"/>
    <property type="match status" value="1"/>
</dbReference>
<dbReference type="Pfam" id="PF04055">
    <property type="entry name" value="Radical_SAM"/>
    <property type="match status" value="1"/>
</dbReference>
<dbReference type="Pfam" id="PF21016">
    <property type="entry name" value="RlmN_N"/>
    <property type="match status" value="1"/>
</dbReference>
<dbReference type="PIRSF" id="PIRSF006004">
    <property type="entry name" value="CHP00048"/>
    <property type="match status" value="1"/>
</dbReference>
<dbReference type="SFLD" id="SFLDF00275">
    <property type="entry name" value="adenosine_C2_methyltransferase"/>
    <property type="match status" value="1"/>
</dbReference>
<dbReference type="SFLD" id="SFLDS00029">
    <property type="entry name" value="Radical_SAM"/>
    <property type="match status" value="1"/>
</dbReference>
<dbReference type="SUPFAM" id="SSF102114">
    <property type="entry name" value="Radical SAM enzymes"/>
    <property type="match status" value="1"/>
</dbReference>
<dbReference type="PROSITE" id="PS51918">
    <property type="entry name" value="RADICAL_SAM"/>
    <property type="match status" value="1"/>
</dbReference>
<accession>Q8DQG7</accession>
<evidence type="ECO:0000255" key="1">
    <source>
        <dbReference type="HAMAP-Rule" id="MF_01849"/>
    </source>
</evidence>
<evidence type="ECO:0000255" key="2">
    <source>
        <dbReference type="PROSITE-ProRule" id="PRU01266"/>
    </source>
</evidence>
<reference key="1">
    <citation type="journal article" date="2001" name="J. Bacteriol.">
        <title>Genome of the bacterium Streptococcus pneumoniae strain R6.</title>
        <authorList>
            <person name="Hoskins J."/>
            <person name="Alborn W.E. Jr."/>
            <person name="Arnold J."/>
            <person name="Blaszczak L.C."/>
            <person name="Burgett S."/>
            <person name="DeHoff B.S."/>
            <person name="Estrem S.T."/>
            <person name="Fritz L."/>
            <person name="Fu D.-J."/>
            <person name="Fuller W."/>
            <person name="Geringer C."/>
            <person name="Gilmour R."/>
            <person name="Glass J.S."/>
            <person name="Khoja H."/>
            <person name="Kraft A.R."/>
            <person name="Lagace R.E."/>
            <person name="LeBlanc D.J."/>
            <person name="Lee L.N."/>
            <person name="Lefkowitz E.J."/>
            <person name="Lu J."/>
            <person name="Matsushima P."/>
            <person name="McAhren S.M."/>
            <person name="McHenney M."/>
            <person name="McLeaster K."/>
            <person name="Mundy C.W."/>
            <person name="Nicas T.I."/>
            <person name="Norris F.H."/>
            <person name="O'Gara M."/>
            <person name="Peery R.B."/>
            <person name="Robertson G.T."/>
            <person name="Rockey P."/>
            <person name="Sun P.-M."/>
            <person name="Winkler M.E."/>
            <person name="Yang Y."/>
            <person name="Young-Bellido M."/>
            <person name="Zhao G."/>
            <person name="Zook C.A."/>
            <person name="Baltz R.H."/>
            <person name="Jaskunas S.R."/>
            <person name="Rosteck P.R. Jr."/>
            <person name="Skatrud P.L."/>
            <person name="Glass J.I."/>
        </authorList>
    </citation>
    <scope>NUCLEOTIDE SEQUENCE [LARGE SCALE GENOMIC DNA]</scope>
    <source>
        <strain>ATCC BAA-255 / R6</strain>
    </source>
</reference>
<organism>
    <name type="scientific">Streptococcus pneumoniae (strain ATCC BAA-255 / R6)</name>
    <dbReference type="NCBI Taxonomy" id="171101"/>
    <lineage>
        <taxon>Bacteria</taxon>
        <taxon>Bacillati</taxon>
        <taxon>Bacillota</taxon>
        <taxon>Bacilli</taxon>
        <taxon>Lactobacillales</taxon>
        <taxon>Streptococcaceae</taxon>
        <taxon>Streptococcus</taxon>
    </lineage>
</organism>